<gene>
    <name type="primary">trpB2</name>
    <name type="ordered locus">MA_3198</name>
</gene>
<feature type="chain" id="PRO_0000099037" description="Tryptophan synthase beta chain 2">
    <location>
        <begin position="1"/>
        <end position="442"/>
    </location>
</feature>
<feature type="modified residue" description="N6-(pyridoxal phosphate)lysine" evidence="1">
    <location>
        <position position="122"/>
    </location>
</feature>
<name>TRPB2_METAC</name>
<comment type="function">
    <text evidence="1">The beta subunit is responsible for the synthesis of L-tryptophan from indole and L-serine.</text>
</comment>
<comment type="catalytic activity">
    <reaction>
        <text>(1S,2R)-1-C-(indol-3-yl)glycerol 3-phosphate + L-serine = D-glyceraldehyde 3-phosphate + L-tryptophan + H2O</text>
        <dbReference type="Rhea" id="RHEA:10532"/>
        <dbReference type="ChEBI" id="CHEBI:15377"/>
        <dbReference type="ChEBI" id="CHEBI:33384"/>
        <dbReference type="ChEBI" id="CHEBI:57912"/>
        <dbReference type="ChEBI" id="CHEBI:58866"/>
        <dbReference type="ChEBI" id="CHEBI:59776"/>
        <dbReference type="EC" id="4.2.1.20"/>
    </reaction>
</comment>
<comment type="cofactor">
    <cofactor evidence="1">
        <name>pyridoxal 5'-phosphate</name>
        <dbReference type="ChEBI" id="CHEBI:597326"/>
    </cofactor>
</comment>
<comment type="pathway">
    <text>Amino-acid biosynthesis; L-tryptophan biosynthesis; L-tryptophan from chorismate: step 5/5.</text>
</comment>
<comment type="subunit">
    <text evidence="1">Tetramer of two alpha and two beta chains.</text>
</comment>
<comment type="similarity">
    <text evidence="2">Belongs to the TrpB family.</text>
</comment>
<protein>
    <recommendedName>
        <fullName>Tryptophan synthase beta chain 2</fullName>
        <ecNumber>4.2.1.20</ecNumber>
    </recommendedName>
</protein>
<sequence>MYRNDVKEISMEQTKIILDENEMPKKWYNVLADLPSPIDPPLDPRTWQPISPDALEPIFPKALIMQEMSSDRYIDIPEEVLDVYRLWRPSPLFRAHQLEKVLKSPAKIYYKYEGVSPAGSHKTNTSIAQAYYNMKEGTERLTTETGAGQWGSALSLACNYFDLECKVYMVRSSFYQKPYRKSLITLWGGNVVPSPSPDTEFGRKILQEQPDTPGSLGIAISEAVEDAIAHENTKYSLGSVLNHVVLHQTVIGAECKQQLAQVEEYPDVVIGCCGGGSNLGGIGLEFIKDRLEGKHSARVVAVEPSACPSLTKGEYRYDFGDTAEMTPLLKMYTLGHKHVPPAIHAGGLRYHGDSPIISKLCSEGLMEAVSYDQQEVFDAAVQFARTEGIVPAPESSHAIRCAIDEALAAKQTGEEKTILFNLSGHGHFDMSSYDKYFSGELM</sequence>
<evidence type="ECO:0000250" key="1"/>
<evidence type="ECO:0000305" key="2"/>
<reference key="1">
    <citation type="journal article" date="2002" name="Genome Res.">
        <title>The genome of Methanosarcina acetivorans reveals extensive metabolic and physiological diversity.</title>
        <authorList>
            <person name="Galagan J.E."/>
            <person name="Nusbaum C."/>
            <person name="Roy A."/>
            <person name="Endrizzi M.G."/>
            <person name="Macdonald P."/>
            <person name="FitzHugh W."/>
            <person name="Calvo S."/>
            <person name="Engels R."/>
            <person name="Smirnov S."/>
            <person name="Atnoor D."/>
            <person name="Brown A."/>
            <person name="Allen N."/>
            <person name="Naylor J."/>
            <person name="Stange-Thomann N."/>
            <person name="DeArellano K."/>
            <person name="Johnson R."/>
            <person name="Linton L."/>
            <person name="McEwan P."/>
            <person name="McKernan K."/>
            <person name="Talamas J."/>
            <person name="Tirrell A."/>
            <person name="Ye W."/>
            <person name="Zimmer A."/>
            <person name="Barber R.D."/>
            <person name="Cann I."/>
            <person name="Graham D.E."/>
            <person name="Grahame D.A."/>
            <person name="Guss A.M."/>
            <person name="Hedderich R."/>
            <person name="Ingram-Smith C."/>
            <person name="Kuettner H.C."/>
            <person name="Krzycki J.A."/>
            <person name="Leigh J.A."/>
            <person name="Li W."/>
            <person name="Liu J."/>
            <person name="Mukhopadhyay B."/>
            <person name="Reeve J.N."/>
            <person name="Smith K."/>
            <person name="Springer T.A."/>
            <person name="Umayam L.A."/>
            <person name="White O."/>
            <person name="White R.H."/>
            <person name="de Macario E.C."/>
            <person name="Ferry J.G."/>
            <person name="Jarrell K.F."/>
            <person name="Jing H."/>
            <person name="Macario A.J.L."/>
            <person name="Paulsen I.T."/>
            <person name="Pritchett M."/>
            <person name="Sowers K.R."/>
            <person name="Swanson R.V."/>
            <person name="Zinder S.H."/>
            <person name="Lander E."/>
            <person name="Metcalf W.W."/>
            <person name="Birren B."/>
        </authorList>
    </citation>
    <scope>NUCLEOTIDE SEQUENCE [LARGE SCALE GENOMIC DNA]</scope>
    <source>
        <strain>ATCC 35395 / DSM 2834 / JCM 12185 / C2A</strain>
    </source>
</reference>
<dbReference type="EC" id="4.2.1.20"/>
<dbReference type="EMBL" id="AE010299">
    <property type="protein sequence ID" value="AAM06569.1"/>
    <property type="molecule type" value="Genomic_DNA"/>
</dbReference>
<dbReference type="SMR" id="Q8TL44"/>
<dbReference type="STRING" id="188937.MA_3198"/>
<dbReference type="EnsemblBacteria" id="AAM06569">
    <property type="protein sequence ID" value="AAM06569"/>
    <property type="gene ID" value="MA_3198"/>
</dbReference>
<dbReference type="KEGG" id="mac:MA_3198"/>
<dbReference type="HOGENOM" id="CLU_042858_1_0_2"/>
<dbReference type="InParanoid" id="Q8TL44"/>
<dbReference type="PhylomeDB" id="Q8TL44"/>
<dbReference type="UniPathway" id="UPA00035">
    <property type="reaction ID" value="UER00044"/>
</dbReference>
<dbReference type="Proteomes" id="UP000002487">
    <property type="component" value="Chromosome"/>
</dbReference>
<dbReference type="GO" id="GO:0052684">
    <property type="term" value="F:L-serine hydro-lyase (adding indole, L-tryptophan-forming) activity"/>
    <property type="evidence" value="ECO:0000318"/>
    <property type="project" value="GO_Central"/>
</dbReference>
<dbReference type="GO" id="GO:0030170">
    <property type="term" value="F:pyridoxal phosphate binding"/>
    <property type="evidence" value="ECO:0007669"/>
    <property type="project" value="InterPro"/>
</dbReference>
<dbReference type="GO" id="GO:0004834">
    <property type="term" value="F:tryptophan synthase activity"/>
    <property type="evidence" value="ECO:0007669"/>
    <property type="project" value="UniProtKB-UniRule"/>
</dbReference>
<dbReference type="GO" id="GO:0000162">
    <property type="term" value="P:L-tryptophan biosynthetic process"/>
    <property type="evidence" value="ECO:0000318"/>
    <property type="project" value="GO_Central"/>
</dbReference>
<dbReference type="CDD" id="cd06446">
    <property type="entry name" value="Trp-synth_B"/>
    <property type="match status" value="1"/>
</dbReference>
<dbReference type="Gene3D" id="3.40.50.1100">
    <property type="match status" value="2"/>
</dbReference>
<dbReference type="HAMAP" id="MF_00133">
    <property type="entry name" value="Trp_synth_beta"/>
    <property type="match status" value="1"/>
</dbReference>
<dbReference type="InterPro" id="IPR006316">
    <property type="entry name" value="Trp_synth_b-like"/>
</dbReference>
<dbReference type="InterPro" id="IPR006653">
    <property type="entry name" value="Trp_synth_b_CS"/>
</dbReference>
<dbReference type="InterPro" id="IPR006654">
    <property type="entry name" value="Trp_synth_beta"/>
</dbReference>
<dbReference type="InterPro" id="IPR023026">
    <property type="entry name" value="Trp_synth_beta/beta-like"/>
</dbReference>
<dbReference type="InterPro" id="IPR001926">
    <property type="entry name" value="TrpB-like_PALP"/>
</dbReference>
<dbReference type="InterPro" id="IPR036052">
    <property type="entry name" value="TrpB-like_PALP_sf"/>
</dbReference>
<dbReference type="NCBIfam" id="NF009057">
    <property type="entry name" value="PRK12391.1"/>
    <property type="match status" value="1"/>
</dbReference>
<dbReference type="NCBIfam" id="TIGR01415">
    <property type="entry name" value="trpB_rel"/>
    <property type="match status" value="1"/>
</dbReference>
<dbReference type="PANTHER" id="PTHR48077:SF6">
    <property type="entry name" value="TRYPTOPHAN SYNTHASE"/>
    <property type="match status" value="1"/>
</dbReference>
<dbReference type="PANTHER" id="PTHR48077">
    <property type="entry name" value="TRYPTOPHAN SYNTHASE-RELATED"/>
    <property type="match status" value="1"/>
</dbReference>
<dbReference type="Pfam" id="PF00291">
    <property type="entry name" value="PALP"/>
    <property type="match status" value="1"/>
</dbReference>
<dbReference type="PIRSF" id="PIRSF001413">
    <property type="entry name" value="Trp_syn_beta"/>
    <property type="match status" value="1"/>
</dbReference>
<dbReference type="PIRSF" id="PIRSF500824">
    <property type="entry name" value="TrpB_prok"/>
    <property type="match status" value="1"/>
</dbReference>
<dbReference type="SUPFAM" id="SSF53686">
    <property type="entry name" value="Tryptophan synthase beta subunit-like PLP-dependent enzymes"/>
    <property type="match status" value="1"/>
</dbReference>
<dbReference type="PROSITE" id="PS00168">
    <property type="entry name" value="TRP_SYNTHASE_BETA"/>
    <property type="match status" value="1"/>
</dbReference>
<organism>
    <name type="scientific">Methanosarcina acetivorans (strain ATCC 35395 / DSM 2834 / JCM 12185 / C2A)</name>
    <dbReference type="NCBI Taxonomy" id="188937"/>
    <lineage>
        <taxon>Archaea</taxon>
        <taxon>Methanobacteriati</taxon>
        <taxon>Methanobacteriota</taxon>
        <taxon>Stenosarchaea group</taxon>
        <taxon>Methanomicrobia</taxon>
        <taxon>Methanosarcinales</taxon>
        <taxon>Methanosarcinaceae</taxon>
        <taxon>Methanosarcina</taxon>
    </lineage>
</organism>
<keyword id="KW-0028">Amino-acid biosynthesis</keyword>
<keyword id="KW-0057">Aromatic amino acid biosynthesis</keyword>
<keyword id="KW-0456">Lyase</keyword>
<keyword id="KW-0663">Pyridoxal phosphate</keyword>
<keyword id="KW-1185">Reference proteome</keyword>
<keyword id="KW-0822">Tryptophan biosynthesis</keyword>
<proteinExistence type="inferred from homology"/>
<accession>Q8TL44</accession>